<organism>
    <name type="scientific">Aquifex aeolicus (strain VF5)</name>
    <dbReference type="NCBI Taxonomy" id="224324"/>
    <lineage>
        <taxon>Bacteria</taxon>
        <taxon>Pseudomonadati</taxon>
        <taxon>Aquificota</taxon>
        <taxon>Aquificia</taxon>
        <taxon>Aquificales</taxon>
        <taxon>Aquificaceae</taxon>
        <taxon>Aquifex</taxon>
    </lineage>
</organism>
<evidence type="ECO:0000255" key="1">
    <source>
        <dbReference type="HAMAP-Rule" id="MF_00235"/>
    </source>
</evidence>
<evidence type="ECO:0000269" key="2">
    <source>
    </source>
</evidence>
<evidence type="ECO:0000305" key="3">
    <source>
    </source>
</evidence>
<evidence type="ECO:0007829" key="4">
    <source>
        <dbReference type="PDB" id="4JL5"/>
    </source>
</evidence>
<name>KAD_AQUAE</name>
<gene>
    <name evidence="1" type="primary">adk</name>
    <name type="ordered locus">aq_078</name>
</gene>
<protein>
    <recommendedName>
        <fullName evidence="1">Adenylate kinase</fullName>
        <shortName evidence="1">AK</shortName>
        <ecNumber evidence="1">2.7.4.3</ecNumber>
    </recommendedName>
    <alternativeName>
        <fullName evidence="1">ATP-AMP transphosphorylase</fullName>
    </alternativeName>
    <alternativeName>
        <fullName evidence="1">ATP:AMP phosphotransferase</fullName>
    </alternativeName>
    <alternativeName>
        <fullName evidence="1">Adenylate monophosphate kinase</fullName>
    </alternativeName>
</protein>
<reference key="1">
    <citation type="journal article" date="1998" name="Nature">
        <title>The complete genome of the hyperthermophilic bacterium Aquifex aeolicus.</title>
        <authorList>
            <person name="Deckert G."/>
            <person name="Warren P.V."/>
            <person name="Gaasterland T."/>
            <person name="Young W.G."/>
            <person name="Lenox A.L."/>
            <person name="Graham D.E."/>
            <person name="Overbeek R."/>
            <person name="Snead M.A."/>
            <person name="Keller M."/>
            <person name="Aujay M."/>
            <person name="Huber R."/>
            <person name="Feldman R.A."/>
            <person name="Short J.M."/>
            <person name="Olsen G.J."/>
            <person name="Swanson R.V."/>
        </authorList>
    </citation>
    <scope>NUCLEOTIDE SEQUENCE [LARGE SCALE GENOMIC DNA]</scope>
    <source>
        <strain>VF5</strain>
    </source>
</reference>
<reference key="2">
    <citation type="journal article" date="2007" name="Nature">
        <title>Intrinsic motions along an enzymatic reaction trajectory.</title>
        <authorList>
            <person name="Henzler-Wildman K.A."/>
            <person name="Thai V."/>
            <person name="Lei M."/>
            <person name="Ott M."/>
            <person name="Wolf-Watz M."/>
            <person name="Fenn T."/>
            <person name="Pozharski E."/>
            <person name="Wilson M.A."/>
            <person name="Petsko G.A."/>
            <person name="Karplus M."/>
            <person name="Hubner C.G."/>
            <person name="Kern D."/>
        </authorList>
    </citation>
    <scope>X-RAY CRYSTALLOGRAPHY (1.90 ANGSTROMS) IN COMPLEX WITH BI-SUBSTRATE ANALOG AP5A</scope>
</reference>
<comment type="function">
    <text evidence="1">Catalyzes the reversible transfer of the terminal phosphate group between ATP and AMP. Plays an important role in cellular energy homeostasis and in adenine nucleotide metabolism.</text>
</comment>
<comment type="catalytic activity">
    <reaction evidence="1">
        <text>AMP + ATP = 2 ADP</text>
        <dbReference type="Rhea" id="RHEA:12973"/>
        <dbReference type="ChEBI" id="CHEBI:30616"/>
        <dbReference type="ChEBI" id="CHEBI:456215"/>
        <dbReference type="ChEBI" id="CHEBI:456216"/>
        <dbReference type="EC" id="2.7.4.3"/>
    </reaction>
</comment>
<comment type="pathway">
    <text evidence="1">Purine metabolism; AMP biosynthesis via salvage pathway; AMP from ADP: step 1/1.</text>
</comment>
<comment type="subunit">
    <text evidence="1">Monomer.</text>
</comment>
<comment type="subcellular location">
    <subcellularLocation>
        <location evidence="1">Cytoplasm</location>
    </subcellularLocation>
</comment>
<comment type="domain">
    <text evidence="1 3">Consists of three domains, a large central CORE domain and two small peripheral domains, NMPbind and LID, which undergo movements during catalysis. The LID domain closes over the site of phosphoryl transfer upon ATP binding. Assembling and dissambling the active center during each catalytic cycle provides an effective means to prevent ATP hydrolysis.</text>
</comment>
<comment type="similarity">
    <text evidence="1">Belongs to the adenylate kinase family.</text>
</comment>
<proteinExistence type="evidence at protein level"/>
<feature type="chain" id="PRO_0000158718" description="Adenylate kinase">
    <location>
        <begin position="1"/>
        <end position="206"/>
    </location>
</feature>
<feature type="region of interest" description="NMP" evidence="1 2">
    <location>
        <begin position="30"/>
        <end position="59"/>
    </location>
</feature>
<feature type="region of interest" description="LID" evidence="1 2">
    <location>
        <begin position="123"/>
        <end position="153"/>
    </location>
</feature>
<feature type="binding site" evidence="1 2">
    <location>
        <begin position="10"/>
        <end position="15"/>
    </location>
    <ligand>
        <name>ATP</name>
        <dbReference type="ChEBI" id="CHEBI:30616"/>
    </ligand>
</feature>
<feature type="binding site" evidence="1 2">
    <location>
        <position position="31"/>
    </location>
    <ligand>
        <name>AMP</name>
        <dbReference type="ChEBI" id="CHEBI:456215"/>
    </ligand>
</feature>
<feature type="binding site" evidence="1 2">
    <location>
        <begin position="57"/>
        <end position="59"/>
    </location>
    <ligand>
        <name>AMP</name>
        <dbReference type="ChEBI" id="CHEBI:456215"/>
    </ligand>
</feature>
<feature type="binding site" evidence="1 2">
    <location>
        <begin position="82"/>
        <end position="85"/>
    </location>
    <ligand>
        <name>AMP</name>
        <dbReference type="ChEBI" id="CHEBI:456215"/>
    </ligand>
</feature>
<feature type="binding site" evidence="1 2">
    <location>
        <position position="89"/>
    </location>
    <ligand>
        <name>AMP</name>
        <dbReference type="ChEBI" id="CHEBI:456215"/>
    </ligand>
</feature>
<feature type="binding site" evidence="1 2">
    <location>
        <position position="120"/>
    </location>
    <ligand>
        <name>ATP</name>
        <dbReference type="ChEBI" id="CHEBI:30616"/>
    </ligand>
</feature>
<feature type="binding site" evidence="1 2">
    <location>
        <position position="124"/>
    </location>
    <ligand>
        <name>ATP</name>
        <dbReference type="ChEBI" id="CHEBI:30616"/>
    </ligand>
</feature>
<feature type="binding site" evidence="1 2">
    <location>
        <begin position="133"/>
        <end position="134"/>
    </location>
    <ligand>
        <name>ATP</name>
        <dbReference type="ChEBI" id="CHEBI:30616"/>
    </ligand>
</feature>
<feature type="binding site" evidence="1 2">
    <location>
        <position position="161"/>
    </location>
    <ligand>
        <name>AMP</name>
        <dbReference type="ChEBI" id="CHEBI:456215"/>
    </ligand>
</feature>
<feature type="binding site" evidence="1 2">
    <location>
        <position position="189"/>
    </location>
    <ligand>
        <name>ATP</name>
        <dbReference type="ChEBI" id="CHEBI:30616"/>
    </ligand>
</feature>
<feature type="strand" evidence="4">
    <location>
        <begin position="2"/>
        <end position="6"/>
    </location>
</feature>
<feature type="helix" evidence="4">
    <location>
        <begin position="13"/>
        <end position="24"/>
    </location>
</feature>
<feature type="strand" evidence="4">
    <location>
        <begin position="27"/>
        <end position="30"/>
    </location>
</feature>
<feature type="helix" evidence="4">
    <location>
        <begin position="31"/>
        <end position="41"/>
    </location>
</feature>
<feature type="helix" evidence="4">
    <location>
        <begin position="44"/>
        <end position="55"/>
    </location>
</feature>
<feature type="helix" evidence="4">
    <location>
        <begin position="61"/>
        <end position="71"/>
    </location>
</feature>
<feature type="strand" evidence="4">
    <location>
        <begin position="74"/>
        <end position="76"/>
    </location>
</feature>
<feature type="strand" evidence="4">
    <location>
        <begin position="78"/>
        <end position="82"/>
    </location>
</feature>
<feature type="helix" evidence="4">
    <location>
        <begin position="87"/>
        <end position="99"/>
    </location>
</feature>
<feature type="strand" evidence="4">
    <location>
        <begin position="106"/>
        <end position="111"/>
    </location>
</feature>
<feature type="helix" evidence="4">
    <location>
        <begin position="114"/>
        <end position="122"/>
    </location>
</feature>
<feature type="strand" evidence="4">
    <location>
        <begin position="124"/>
        <end position="126"/>
    </location>
</feature>
<feature type="turn" evidence="4">
    <location>
        <begin position="128"/>
        <end position="130"/>
    </location>
</feature>
<feature type="strand" evidence="4">
    <location>
        <begin position="133"/>
        <end position="135"/>
    </location>
</feature>
<feature type="turn" evidence="4">
    <location>
        <begin position="136"/>
        <end position="138"/>
    </location>
</feature>
<feature type="helix" evidence="4">
    <location>
        <begin position="151"/>
        <end position="153"/>
    </location>
</feature>
<feature type="helix" evidence="4">
    <location>
        <begin position="155"/>
        <end position="168"/>
    </location>
</feature>
<feature type="helix" evidence="4">
    <location>
        <begin position="171"/>
        <end position="177"/>
    </location>
</feature>
<feature type="turn" evidence="4">
    <location>
        <begin position="178"/>
        <end position="180"/>
    </location>
</feature>
<feature type="strand" evidence="4">
    <location>
        <begin position="182"/>
        <end position="186"/>
    </location>
</feature>
<feature type="helix" evidence="4">
    <location>
        <begin position="191"/>
        <end position="202"/>
    </location>
</feature>
<keyword id="KW-0002">3D-structure</keyword>
<keyword id="KW-0067">ATP-binding</keyword>
<keyword id="KW-0963">Cytoplasm</keyword>
<keyword id="KW-0418">Kinase</keyword>
<keyword id="KW-0545">Nucleotide biosynthesis</keyword>
<keyword id="KW-0547">Nucleotide-binding</keyword>
<keyword id="KW-1185">Reference proteome</keyword>
<keyword id="KW-0808">Transferase</keyword>
<dbReference type="EC" id="2.7.4.3" evidence="1"/>
<dbReference type="EMBL" id="AE000657">
    <property type="protein sequence ID" value="AAC06438.1"/>
    <property type="molecule type" value="Genomic_DNA"/>
</dbReference>
<dbReference type="PIR" id="G70307">
    <property type="entry name" value="G70307"/>
</dbReference>
<dbReference type="RefSeq" id="NP_213050.1">
    <property type="nucleotide sequence ID" value="NC_000918.1"/>
</dbReference>
<dbReference type="RefSeq" id="WP_010879988.1">
    <property type="nucleotide sequence ID" value="NC_000918.1"/>
</dbReference>
<dbReference type="PDB" id="2RGX">
    <property type="method" value="X-ray"/>
    <property type="resolution" value="1.90 A"/>
    <property type="chains" value="A=1-206"/>
</dbReference>
<dbReference type="PDB" id="2RH5">
    <property type="method" value="X-ray"/>
    <property type="resolution" value="2.48 A"/>
    <property type="chains" value="A/B/C=1-206"/>
</dbReference>
<dbReference type="PDB" id="3SR0">
    <property type="method" value="X-ray"/>
    <property type="resolution" value="1.56 A"/>
    <property type="chains" value="A/B=1-206"/>
</dbReference>
<dbReference type="PDB" id="4CF7">
    <property type="method" value="X-ray"/>
    <property type="resolution" value="1.59 A"/>
    <property type="chains" value="A/B=1-206"/>
</dbReference>
<dbReference type="PDB" id="4IKE">
    <property type="method" value="X-ray"/>
    <property type="resolution" value="1.48 A"/>
    <property type="chains" value="A/B=1-206"/>
</dbReference>
<dbReference type="PDB" id="4JKY">
    <property type="method" value="X-ray"/>
    <property type="resolution" value="2.37 A"/>
    <property type="chains" value="A/B=1-203"/>
</dbReference>
<dbReference type="PDB" id="4JL5">
    <property type="method" value="X-ray"/>
    <property type="resolution" value="1.24 A"/>
    <property type="chains" value="A/B=1-203"/>
</dbReference>
<dbReference type="PDB" id="4JL6">
    <property type="method" value="X-ray"/>
    <property type="resolution" value="1.65 A"/>
    <property type="chains" value="A/B=1-203"/>
</dbReference>
<dbReference type="PDB" id="4JL8">
    <property type="method" value="X-ray"/>
    <property type="resolution" value="1.79 A"/>
    <property type="chains" value="A/B=1-203"/>
</dbReference>
<dbReference type="PDB" id="4JLA">
    <property type="method" value="X-ray"/>
    <property type="resolution" value="2.12 A"/>
    <property type="chains" value="A/B=1-203"/>
</dbReference>
<dbReference type="PDB" id="4JLB">
    <property type="method" value="X-ray"/>
    <property type="resolution" value="1.53 A"/>
    <property type="chains" value="A/B=1-203"/>
</dbReference>
<dbReference type="PDB" id="4JLD">
    <property type="method" value="X-ray"/>
    <property type="resolution" value="1.55 A"/>
    <property type="chains" value="A/B=1-203"/>
</dbReference>
<dbReference type="PDB" id="4JLO">
    <property type="method" value="X-ray"/>
    <property type="resolution" value="1.73 A"/>
    <property type="chains" value="A/B=1-203"/>
</dbReference>
<dbReference type="PDB" id="4JLP">
    <property type="method" value="X-ray"/>
    <property type="resolution" value="1.43 A"/>
    <property type="chains" value="A/B=1-203"/>
</dbReference>
<dbReference type="PDBsum" id="2RGX"/>
<dbReference type="PDBsum" id="2RH5"/>
<dbReference type="PDBsum" id="3SR0"/>
<dbReference type="PDBsum" id="4CF7"/>
<dbReference type="PDBsum" id="4IKE"/>
<dbReference type="PDBsum" id="4JKY"/>
<dbReference type="PDBsum" id="4JL5"/>
<dbReference type="PDBsum" id="4JL6"/>
<dbReference type="PDBsum" id="4JL8"/>
<dbReference type="PDBsum" id="4JLA"/>
<dbReference type="PDBsum" id="4JLB"/>
<dbReference type="PDBsum" id="4JLD"/>
<dbReference type="PDBsum" id="4JLO"/>
<dbReference type="PDBsum" id="4JLP"/>
<dbReference type="SMR" id="O66490"/>
<dbReference type="FunCoup" id="O66490">
    <property type="interactions" value="460"/>
</dbReference>
<dbReference type="STRING" id="224324.aq_078"/>
<dbReference type="EnsemblBacteria" id="AAC06438">
    <property type="protein sequence ID" value="AAC06438"/>
    <property type="gene ID" value="aq_078"/>
</dbReference>
<dbReference type="KEGG" id="aae:aq_078"/>
<dbReference type="PATRIC" id="fig|224324.8.peg.68"/>
<dbReference type="eggNOG" id="COG0563">
    <property type="taxonomic scope" value="Bacteria"/>
</dbReference>
<dbReference type="HOGENOM" id="CLU_032354_1_2_0"/>
<dbReference type="InParanoid" id="O66490"/>
<dbReference type="OrthoDB" id="9805030at2"/>
<dbReference type="BRENDA" id="2.7.4.3">
    <property type="organism ID" value="396"/>
</dbReference>
<dbReference type="UniPathway" id="UPA00588">
    <property type="reaction ID" value="UER00649"/>
</dbReference>
<dbReference type="EvolutionaryTrace" id="O66490"/>
<dbReference type="Proteomes" id="UP000000798">
    <property type="component" value="Chromosome"/>
</dbReference>
<dbReference type="GO" id="GO:0005737">
    <property type="term" value="C:cytoplasm"/>
    <property type="evidence" value="ECO:0000318"/>
    <property type="project" value="GO_Central"/>
</dbReference>
<dbReference type="GO" id="GO:0005829">
    <property type="term" value="C:cytosol"/>
    <property type="evidence" value="ECO:0000318"/>
    <property type="project" value="GO_Central"/>
</dbReference>
<dbReference type="GO" id="GO:0004017">
    <property type="term" value="F:adenylate kinase activity"/>
    <property type="evidence" value="ECO:0000318"/>
    <property type="project" value="GO_Central"/>
</dbReference>
<dbReference type="GO" id="GO:0005524">
    <property type="term" value="F:ATP binding"/>
    <property type="evidence" value="ECO:0007669"/>
    <property type="project" value="UniProtKB-UniRule"/>
</dbReference>
<dbReference type="GO" id="GO:0004550">
    <property type="term" value="F:nucleoside diphosphate kinase activity"/>
    <property type="evidence" value="ECO:0000318"/>
    <property type="project" value="GO_Central"/>
</dbReference>
<dbReference type="GO" id="GO:0044209">
    <property type="term" value="P:AMP salvage"/>
    <property type="evidence" value="ECO:0007669"/>
    <property type="project" value="UniProtKB-UniRule"/>
</dbReference>
<dbReference type="GO" id="GO:0009132">
    <property type="term" value="P:nucleoside diphosphate metabolic process"/>
    <property type="evidence" value="ECO:0000318"/>
    <property type="project" value="GO_Central"/>
</dbReference>
<dbReference type="GO" id="GO:0009123">
    <property type="term" value="P:nucleoside monophosphate metabolic process"/>
    <property type="evidence" value="ECO:0000318"/>
    <property type="project" value="GO_Central"/>
</dbReference>
<dbReference type="CDD" id="cd01428">
    <property type="entry name" value="ADK"/>
    <property type="match status" value="1"/>
</dbReference>
<dbReference type="FunFam" id="3.40.50.300:FF:000106">
    <property type="entry name" value="Adenylate kinase mitochondrial"/>
    <property type="match status" value="1"/>
</dbReference>
<dbReference type="Gene3D" id="3.40.50.300">
    <property type="entry name" value="P-loop containing nucleotide triphosphate hydrolases"/>
    <property type="match status" value="1"/>
</dbReference>
<dbReference type="HAMAP" id="MF_00235">
    <property type="entry name" value="Adenylate_kinase_Adk"/>
    <property type="match status" value="1"/>
</dbReference>
<dbReference type="InterPro" id="IPR006259">
    <property type="entry name" value="Adenyl_kin_sub"/>
</dbReference>
<dbReference type="InterPro" id="IPR000850">
    <property type="entry name" value="Adenylat/UMP-CMP_kin"/>
</dbReference>
<dbReference type="InterPro" id="IPR033690">
    <property type="entry name" value="Adenylat_kinase_CS"/>
</dbReference>
<dbReference type="InterPro" id="IPR036193">
    <property type="entry name" value="ADK_active_lid_dom_sf"/>
</dbReference>
<dbReference type="InterPro" id="IPR027417">
    <property type="entry name" value="P-loop_NTPase"/>
</dbReference>
<dbReference type="NCBIfam" id="TIGR01351">
    <property type="entry name" value="adk"/>
    <property type="match status" value="1"/>
</dbReference>
<dbReference type="NCBIfam" id="NF001380">
    <property type="entry name" value="PRK00279.1-2"/>
    <property type="match status" value="1"/>
</dbReference>
<dbReference type="NCBIfam" id="NF001381">
    <property type="entry name" value="PRK00279.1-3"/>
    <property type="match status" value="1"/>
</dbReference>
<dbReference type="NCBIfam" id="NF011100">
    <property type="entry name" value="PRK14527.1"/>
    <property type="match status" value="1"/>
</dbReference>
<dbReference type="PANTHER" id="PTHR23359">
    <property type="entry name" value="NUCLEOTIDE KINASE"/>
    <property type="match status" value="1"/>
</dbReference>
<dbReference type="Pfam" id="PF00406">
    <property type="entry name" value="ADK"/>
    <property type="match status" value="1"/>
</dbReference>
<dbReference type="PRINTS" id="PR00094">
    <property type="entry name" value="ADENYLTKNASE"/>
</dbReference>
<dbReference type="SUPFAM" id="SSF57774">
    <property type="entry name" value="Microbial and mitochondrial ADK, insert 'zinc finger' domain"/>
    <property type="match status" value="1"/>
</dbReference>
<dbReference type="SUPFAM" id="SSF52540">
    <property type="entry name" value="P-loop containing nucleoside triphosphate hydrolases"/>
    <property type="match status" value="1"/>
</dbReference>
<dbReference type="PROSITE" id="PS00113">
    <property type="entry name" value="ADENYLATE_KINASE"/>
    <property type="match status" value="1"/>
</dbReference>
<accession>O66490</accession>
<sequence>MILVFLGPPGAGKGTQAKRLAKEKGFVHISTGDILREAVQKGTPLGKKAKEYMERGELVPDDLIIALIEEVFPKHGNVIFDGFPRTVKQAEALDEMLEKKGLKVDHVLLFEVPDEVVIERLSGRRINPETGEVYHVKYNPPPPGVKVIQREDDKPEVIKKRLEVYREQTAPLIEYYKKKGILRIIDASKPVEEVYRQVLEVIGDGN</sequence>